<gene>
    <name type="ordered locus">At4g09580</name>
    <name type="ORF">T25P22.20</name>
</gene>
<keyword id="KW-0472">Membrane</keyword>
<keyword id="KW-0597">Phosphoprotein</keyword>
<keyword id="KW-1185">Reference proteome</keyword>
<keyword id="KW-0812">Transmembrane</keyword>
<keyword id="KW-1133">Transmembrane helix</keyword>
<reference key="1">
    <citation type="journal article" date="1999" name="Nature">
        <title>Sequence and analysis of chromosome 4 of the plant Arabidopsis thaliana.</title>
        <authorList>
            <person name="Mayer K.F.X."/>
            <person name="Schueller C."/>
            <person name="Wambutt R."/>
            <person name="Murphy G."/>
            <person name="Volckaert G."/>
            <person name="Pohl T."/>
            <person name="Duesterhoeft A."/>
            <person name="Stiekema W."/>
            <person name="Entian K.-D."/>
            <person name="Terryn N."/>
            <person name="Harris B."/>
            <person name="Ansorge W."/>
            <person name="Brandt P."/>
            <person name="Grivell L.A."/>
            <person name="Rieger M."/>
            <person name="Weichselgartner M."/>
            <person name="de Simone V."/>
            <person name="Obermaier B."/>
            <person name="Mache R."/>
            <person name="Mueller M."/>
            <person name="Kreis M."/>
            <person name="Delseny M."/>
            <person name="Puigdomenech P."/>
            <person name="Watson M."/>
            <person name="Schmidtheini T."/>
            <person name="Reichert B."/>
            <person name="Portetelle D."/>
            <person name="Perez-Alonso M."/>
            <person name="Boutry M."/>
            <person name="Bancroft I."/>
            <person name="Vos P."/>
            <person name="Hoheisel J."/>
            <person name="Zimmermann W."/>
            <person name="Wedler H."/>
            <person name="Ridley P."/>
            <person name="Langham S.-A."/>
            <person name="McCullagh B."/>
            <person name="Bilham L."/>
            <person name="Robben J."/>
            <person name="van der Schueren J."/>
            <person name="Grymonprez B."/>
            <person name="Chuang Y.-J."/>
            <person name="Vandenbussche F."/>
            <person name="Braeken M."/>
            <person name="Weltjens I."/>
            <person name="Voet M."/>
            <person name="Bastiaens I."/>
            <person name="Aert R."/>
            <person name="Defoor E."/>
            <person name="Weitzenegger T."/>
            <person name="Bothe G."/>
            <person name="Ramsperger U."/>
            <person name="Hilbert H."/>
            <person name="Braun M."/>
            <person name="Holzer E."/>
            <person name="Brandt A."/>
            <person name="Peters S."/>
            <person name="van Staveren M."/>
            <person name="Dirkse W."/>
            <person name="Mooijman P."/>
            <person name="Klein Lankhorst R."/>
            <person name="Rose M."/>
            <person name="Hauf J."/>
            <person name="Koetter P."/>
            <person name="Berneiser S."/>
            <person name="Hempel S."/>
            <person name="Feldpausch M."/>
            <person name="Lamberth S."/>
            <person name="Van den Daele H."/>
            <person name="De Keyser A."/>
            <person name="Buysshaert C."/>
            <person name="Gielen J."/>
            <person name="Villarroel R."/>
            <person name="De Clercq R."/>
            <person name="van Montagu M."/>
            <person name="Rogers J."/>
            <person name="Cronin A."/>
            <person name="Quail M.A."/>
            <person name="Bray-Allen S."/>
            <person name="Clark L."/>
            <person name="Doggett J."/>
            <person name="Hall S."/>
            <person name="Kay M."/>
            <person name="Lennard N."/>
            <person name="McLay K."/>
            <person name="Mayes R."/>
            <person name="Pettett A."/>
            <person name="Rajandream M.A."/>
            <person name="Lyne M."/>
            <person name="Benes V."/>
            <person name="Rechmann S."/>
            <person name="Borkova D."/>
            <person name="Bloecker H."/>
            <person name="Scharfe M."/>
            <person name="Grimm M."/>
            <person name="Loehnert T.-H."/>
            <person name="Dose S."/>
            <person name="de Haan M."/>
            <person name="Maarse A.C."/>
            <person name="Schaefer M."/>
            <person name="Mueller-Auer S."/>
            <person name="Gabel C."/>
            <person name="Fuchs M."/>
            <person name="Fartmann B."/>
            <person name="Granderath K."/>
            <person name="Dauner D."/>
            <person name="Herzl A."/>
            <person name="Neumann S."/>
            <person name="Argiriou A."/>
            <person name="Vitale D."/>
            <person name="Liguori R."/>
            <person name="Piravandi E."/>
            <person name="Massenet O."/>
            <person name="Quigley F."/>
            <person name="Clabauld G."/>
            <person name="Muendlein A."/>
            <person name="Felber R."/>
            <person name="Schnabl S."/>
            <person name="Hiller R."/>
            <person name="Schmidt W."/>
            <person name="Lecharny A."/>
            <person name="Aubourg S."/>
            <person name="Chefdor F."/>
            <person name="Cooke R."/>
            <person name="Berger C."/>
            <person name="Monfort A."/>
            <person name="Casacuberta E."/>
            <person name="Gibbons T."/>
            <person name="Weber N."/>
            <person name="Vandenbol M."/>
            <person name="Bargues M."/>
            <person name="Terol J."/>
            <person name="Torres A."/>
            <person name="Perez-Perez A."/>
            <person name="Purnelle B."/>
            <person name="Bent E."/>
            <person name="Johnson S."/>
            <person name="Tacon D."/>
            <person name="Jesse T."/>
            <person name="Heijnen L."/>
            <person name="Schwarz S."/>
            <person name="Scholler P."/>
            <person name="Heber S."/>
            <person name="Francs P."/>
            <person name="Bielke C."/>
            <person name="Frishman D."/>
            <person name="Haase D."/>
            <person name="Lemcke K."/>
            <person name="Mewes H.-W."/>
            <person name="Stocker S."/>
            <person name="Zaccaria P."/>
            <person name="Bevan M."/>
            <person name="Wilson R.K."/>
            <person name="de la Bastide M."/>
            <person name="Habermann K."/>
            <person name="Parnell L."/>
            <person name="Dedhia N."/>
            <person name="Gnoj L."/>
            <person name="Schutz K."/>
            <person name="Huang E."/>
            <person name="Spiegel L."/>
            <person name="Sekhon M."/>
            <person name="Murray J."/>
            <person name="Sheet P."/>
            <person name="Cordes M."/>
            <person name="Abu-Threideh J."/>
            <person name="Stoneking T."/>
            <person name="Kalicki J."/>
            <person name="Graves T."/>
            <person name="Harmon G."/>
            <person name="Edwards J."/>
            <person name="Latreille P."/>
            <person name="Courtney L."/>
            <person name="Cloud J."/>
            <person name="Abbott A."/>
            <person name="Scott K."/>
            <person name="Johnson D."/>
            <person name="Minx P."/>
            <person name="Bentley D."/>
            <person name="Fulton B."/>
            <person name="Miller N."/>
            <person name="Greco T."/>
            <person name="Kemp K."/>
            <person name="Kramer J."/>
            <person name="Fulton L."/>
            <person name="Mardis E."/>
            <person name="Dante M."/>
            <person name="Pepin K."/>
            <person name="Hillier L.W."/>
            <person name="Nelson J."/>
            <person name="Spieth J."/>
            <person name="Ryan E."/>
            <person name="Andrews S."/>
            <person name="Geisel C."/>
            <person name="Layman D."/>
            <person name="Du H."/>
            <person name="Ali J."/>
            <person name="Berghoff A."/>
            <person name="Jones K."/>
            <person name="Drone K."/>
            <person name="Cotton M."/>
            <person name="Joshu C."/>
            <person name="Antonoiu B."/>
            <person name="Zidanic M."/>
            <person name="Strong C."/>
            <person name="Sun H."/>
            <person name="Lamar B."/>
            <person name="Yordan C."/>
            <person name="Ma P."/>
            <person name="Zhong J."/>
            <person name="Preston R."/>
            <person name="Vil D."/>
            <person name="Shekher M."/>
            <person name="Matero A."/>
            <person name="Shah R."/>
            <person name="Swaby I.K."/>
            <person name="O'Shaughnessy A."/>
            <person name="Rodriguez M."/>
            <person name="Hoffman J."/>
            <person name="Till S."/>
            <person name="Granat S."/>
            <person name="Shohdy N."/>
            <person name="Hasegawa A."/>
            <person name="Hameed A."/>
            <person name="Lodhi M."/>
            <person name="Johnson A."/>
            <person name="Chen E."/>
            <person name="Marra M.A."/>
            <person name="Martienssen R."/>
            <person name="McCombie W.R."/>
        </authorList>
    </citation>
    <scope>NUCLEOTIDE SEQUENCE [LARGE SCALE GENOMIC DNA]</scope>
    <source>
        <strain>cv. Columbia</strain>
    </source>
</reference>
<reference key="2">
    <citation type="journal article" date="2017" name="Plant J.">
        <title>Araport11: a complete reannotation of the Arabidopsis thaliana reference genome.</title>
        <authorList>
            <person name="Cheng C.Y."/>
            <person name="Krishnakumar V."/>
            <person name="Chan A.P."/>
            <person name="Thibaud-Nissen F."/>
            <person name="Schobel S."/>
            <person name="Town C.D."/>
        </authorList>
    </citation>
    <scope>GENOME REANNOTATION</scope>
    <source>
        <strain>cv. Columbia</strain>
    </source>
</reference>
<reference key="3">
    <citation type="journal article" date="2003" name="Science">
        <title>Empirical analysis of transcriptional activity in the Arabidopsis genome.</title>
        <authorList>
            <person name="Yamada K."/>
            <person name="Lim J."/>
            <person name="Dale J.M."/>
            <person name="Chen H."/>
            <person name="Shinn P."/>
            <person name="Palm C.J."/>
            <person name="Southwick A.M."/>
            <person name="Wu H.C."/>
            <person name="Kim C.J."/>
            <person name="Nguyen M."/>
            <person name="Pham P.K."/>
            <person name="Cheuk R.F."/>
            <person name="Karlin-Newmann G."/>
            <person name="Liu S.X."/>
            <person name="Lam B."/>
            <person name="Sakano H."/>
            <person name="Wu T."/>
            <person name="Yu G."/>
            <person name="Miranda M."/>
            <person name="Quach H.L."/>
            <person name="Tripp M."/>
            <person name="Chang C.H."/>
            <person name="Lee J.M."/>
            <person name="Toriumi M.J."/>
            <person name="Chan M.M."/>
            <person name="Tang C.C."/>
            <person name="Onodera C.S."/>
            <person name="Deng J.M."/>
            <person name="Akiyama K."/>
            <person name="Ansari Y."/>
            <person name="Arakawa T."/>
            <person name="Banh J."/>
            <person name="Banno F."/>
            <person name="Bowser L."/>
            <person name="Brooks S.Y."/>
            <person name="Carninci P."/>
            <person name="Chao Q."/>
            <person name="Choy N."/>
            <person name="Enju A."/>
            <person name="Goldsmith A.D."/>
            <person name="Gurjal M."/>
            <person name="Hansen N.F."/>
            <person name="Hayashizaki Y."/>
            <person name="Johnson-Hopson C."/>
            <person name="Hsuan V.W."/>
            <person name="Iida K."/>
            <person name="Karnes M."/>
            <person name="Khan S."/>
            <person name="Koesema E."/>
            <person name="Ishida J."/>
            <person name="Jiang P.X."/>
            <person name="Jones T."/>
            <person name="Kawai J."/>
            <person name="Kamiya A."/>
            <person name="Meyers C."/>
            <person name="Nakajima M."/>
            <person name="Narusaka M."/>
            <person name="Seki M."/>
            <person name="Sakurai T."/>
            <person name="Satou M."/>
            <person name="Tamse R."/>
            <person name="Vaysberg M."/>
            <person name="Wallender E.K."/>
            <person name="Wong C."/>
            <person name="Yamamura Y."/>
            <person name="Yuan S."/>
            <person name="Shinozaki K."/>
            <person name="Davis R.W."/>
            <person name="Theologis A."/>
            <person name="Ecker J.R."/>
        </authorList>
    </citation>
    <scope>NUCLEOTIDE SEQUENCE [LARGE SCALE MRNA]</scope>
    <source>
        <strain>cv. Columbia</strain>
    </source>
</reference>
<reference key="4">
    <citation type="journal article" date="2009" name="Plant Physiol.">
        <title>Large-scale Arabidopsis phosphoproteome profiling reveals novel chloroplast kinase substrates and phosphorylation networks.</title>
        <authorList>
            <person name="Reiland S."/>
            <person name="Messerli G."/>
            <person name="Baerenfaller K."/>
            <person name="Gerrits B."/>
            <person name="Endler A."/>
            <person name="Grossmann J."/>
            <person name="Gruissem W."/>
            <person name="Baginsky S."/>
        </authorList>
    </citation>
    <scope>PHOSPHORYLATION [LARGE SCALE ANALYSIS] AT SER-37</scope>
    <scope>IDENTIFICATION BY MASS SPECTROMETRY [LARGE SCALE ANALYSIS]</scope>
</reference>
<accession>Q8L586</accession>
<accession>Q9SST4</accession>
<feature type="chain" id="PRO_0000300110" description="Uncharacterized membrane protein At4g09580">
    <location>
        <begin position="1"/>
        <end position="287"/>
    </location>
</feature>
<feature type="transmembrane region" description="Helical" evidence="1">
    <location>
        <begin position="55"/>
        <end position="75"/>
    </location>
</feature>
<feature type="transmembrane region" description="Helical" evidence="1">
    <location>
        <begin position="124"/>
        <end position="144"/>
    </location>
</feature>
<feature type="transmembrane region" description="Helical" evidence="1">
    <location>
        <begin position="147"/>
        <end position="167"/>
    </location>
</feature>
<feature type="transmembrane region" description="Helical" evidence="1">
    <location>
        <begin position="218"/>
        <end position="238"/>
    </location>
</feature>
<feature type="transmembrane region" description="Helical" evidence="1">
    <location>
        <begin position="260"/>
        <end position="280"/>
    </location>
</feature>
<feature type="region of interest" description="Disordered" evidence="2">
    <location>
        <begin position="1"/>
        <end position="44"/>
    </location>
</feature>
<feature type="modified residue" description="Phosphoserine" evidence="4">
    <location>
        <position position="37"/>
    </location>
</feature>
<sequence length="287" mass="32139">MAAPRNLTGDGGARQLVKDEESPAASSAAKGLLNDDSPTGKRTKSERFPLSRWEFAVFFTVFLVFTTGLFCIYLTMPAAEYGKLKVPRTISDLRLLKENLGSYASEYQARFILGYCSTYIFMQTFMIPGTIFMSLLAGALFGVVRGFVLVVLNATAGACSCFFLSKLVGRPLVNWLWPEKLRFFQAEIAKRRDRLLNYMLFLRITPTLPNLFINLSSPIVDIPFHVFFLATLVGLMPASYITVRAGLALGDLRSVKDLYDFKTLSVLFLIGSISIFPALLKRKRVYE</sequence>
<name>Y4958_ARATH</name>
<dbReference type="EMBL" id="AL161515">
    <property type="protein sequence ID" value="CAB78081.1"/>
    <property type="status" value="ALT_SEQ"/>
    <property type="molecule type" value="Genomic_DNA"/>
</dbReference>
<dbReference type="EMBL" id="AL161831">
    <property type="protein sequence ID" value="CAB82125.1"/>
    <property type="status" value="ALT_SEQ"/>
    <property type="molecule type" value="Genomic_DNA"/>
</dbReference>
<dbReference type="EMBL" id="CP002687">
    <property type="protein sequence ID" value="AEE82767.1"/>
    <property type="molecule type" value="Genomic_DNA"/>
</dbReference>
<dbReference type="EMBL" id="AY096649">
    <property type="protein sequence ID" value="AAM20146.1"/>
    <property type="molecule type" value="mRNA"/>
</dbReference>
<dbReference type="EMBL" id="AY114042">
    <property type="protein sequence ID" value="AAM45090.1"/>
    <property type="molecule type" value="mRNA"/>
</dbReference>
<dbReference type="RefSeq" id="NP_192696.3">
    <property type="nucleotide sequence ID" value="NM_117026.5"/>
</dbReference>
<dbReference type="BioGRID" id="11841">
    <property type="interactions" value="6"/>
</dbReference>
<dbReference type="FunCoup" id="Q8L586">
    <property type="interactions" value="3768"/>
</dbReference>
<dbReference type="IntAct" id="Q8L586">
    <property type="interactions" value="6"/>
</dbReference>
<dbReference type="STRING" id="3702.Q8L586"/>
<dbReference type="iPTMnet" id="Q8L586"/>
<dbReference type="PaxDb" id="3702-AT4G09580.1"/>
<dbReference type="ProteomicsDB" id="243007"/>
<dbReference type="EnsemblPlants" id="AT4G09580.1">
    <property type="protein sequence ID" value="AT4G09580.1"/>
    <property type="gene ID" value="AT4G09580"/>
</dbReference>
<dbReference type="GeneID" id="826542"/>
<dbReference type="Gramene" id="AT4G09580.1">
    <property type="protein sequence ID" value="AT4G09580.1"/>
    <property type="gene ID" value="AT4G09580"/>
</dbReference>
<dbReference type="KEGG" id="ath:AT4G09580"/>
<dbReference type="Araport" id="AT4G09580"/>
<dbReference type="TAIR" id="AT4G09580"/>
<dbReference type="eggNOG" id="KOG3140">
    <property type="taxonomic scope" value="Eukaryota"/>
</dbReference>
<dbReference type="HOGENOM" id="CLU_038944_0_0_1"/>
<dbReference type="InParanoid" id="Q8L586"/>
<dbReference type="OMA" id="CIKIPRD"/>
<dbReference type="OrthoDB" id="3364966at2759"/>
<dbReference type="PhylomeDB" id="Q8L586"/>
<dbReference type="PRO" id="PR:Q8L586"/>
<dbReference type="Proteomes" id="UP000006548">
    <property type="component" value="Chromosome 4"/>
</dbReference>
<dbReference type="ExpressionAtlas" id="Q8L586">
    <property type="expression patterns" value="baseline and differential"/>
</dbReference>
<dbReference type="GO" id="GO:0005783">
    <property type="term" value="C:endoplasmic reticulum"/>
    <property type="evidence" value="ECO:0007005"/>
    <property type="project" value="TAIR"/>
</dbReference>
<dbReference type="GO" id="GO:0016020">
    <property type="term" value="C:membrane"/>
    <property type="evidence" value="ECO:0007669"/>
    <property type="project" value="UniProtKB-SubCell"/>
</dbReference>
<dbReference type="InterPro" id="IPR045014">
    <property type="entry name" value="TM41A/B"/>
</dbReference>
<dbReference type="InterPro" id="IPR032816">
    <property type="entry name" value="VTT_dom"/>
</dbReference>
<dbReference type="PANTHER" id="PTHR43220">
    <property type="match status" value="1"/>
</dbReference>
<dbReference type="PANTHER" id="PTHR43220:SF3">
    <property type="entry name" value="PROTEIN, PUTATIVE, EXPRESSED-RELATED"/>
    <property type="match status" value="1"/>
</dbReference>
<dbReference type="Pfam" id="PF09335">
    <property type="entry name" value="VTT_dom"/>
    <property type="match status" value="1"/>
</dbReference>
<protein>
    <recommendedName>
        <fullName>Uncharacterized membrane protein At4g09580</fullName>
    </recommendedName>
</protein>
<comment type="subcellular location">
    <subcellularLocation>
        <location evidence="1">Membrane</location>
        <topology evidence="1">Multi-pass membrane protein</topology>
    </subcellularLocation>
</comment>
<comment type="sequence caution" evidence="3">
    <conflict type="erroneous gene model prediction">
        <sequence resource="EMBL-CDS" id="CAB78081"/>
    </conflict>
</comment>
<comment type="sequence caution" evidence="3">
    <conflict type="erroneous gene model prediction">
        <sequence resource="EMBL-CDS" id="CAB82125"/>
    </conflict>
</comment>
<evidence type="ECO:0000255" key="1"/>
<evidence type="ECO:0000256" key="2">
    <source>
        <dbReference type="SAM" id="MobiDB-lite"/>
    </source>
</evidence>
<evidence type="ECO:0000305" key="3"/>
<evidence type="ECO:0007744" key="4">
    <source>
    </source>
</evidence>
<organism>
    <name type="scientific">Arabidopsis thaliana</name>
    <name type="common">Mouse-ear cress</name>
    <dbReference type="NCBI Taxonomy" id="3702"/>
    <lineage>
        <taxon>Eukaryota</taxon>
        <taxon>Viridiplantae</taxon>
        <taxon>Streptophyta</taxon>
        <taxon>Embryophyta</taxon>
        <taxon>Tracheophyta</taxon>
        <taxon>Spermatophyta</taxon>
        <taxon>Magnoliopsida</taxon>
        <taxon>eudicotyledons</taxon>
        <taxon>Gunneridae</taxon>
        <taxon>Pentapetalae</taxon>
        <taxon>rosids</taxon>
        <taxon>malvids</taxon>
        <taxon>Brassicales</taxon>
        <taxon>Brassicaceae</taxon>
        <taxon>Camelineae</taxon>
        <taxon>Arabidopsis</taxon>
    </lineage>
</organism>
<proteinExistence type="evidence at protein level"/>